<dbReference type="EMBL" id="AJ235270">
    <property type="protein sequence ID" value="CAA14563.1"/>
    <property type="molecule type" value="Genomic_DNA"/>
</dbReference>
<dbReference type="PIR" id="D71718">
    <property type="entry name" value="D71718"/>
</dbReference>
<dbReference type="RefSeq" id="NP_220486.1">
    <property type="nucleotide sequence ID" value="NC_000963.1"/>
</dbReference>
<dbReference type="RefSeq" id="WP_004599738.1">
    <property type="nucleotide sequence ID" value="NC_000963.1"/>
</dbReference>
<dbReference type="SMR" id="Q9ZE54"/>
<dbReference type="STRING" id="272947.gene:17555176"/>
<dbReference type="EnsemblBacteria" id="CAA14563">
    <property type="protein sequence ID" value="CAA14563"/>
    <property type="gene ID" value="CAA14563"/>
</dbReference>
<dbReference type="KEGG" id="rpr:RP093"/>
<dbReference type="PATRIC" id="fig|272947.5.peg.93"/>
<dbReference type="eggNOG" id="COG2853">
    <property type="taxonomic scope" value="Bacteria"/>
</dbReference>
<dbReference type="HOGENOM" id="CLU_059326_2_2_5"/>
<dbReference type="OrthoDB" id="9785326at2"/>
<dbReference type="Proteomes" id="UP000002480">
    <property type="component" value="Chromosome"/>
</dbReference>
<dbReference type="GO" id="GO:0016020">
    <property type="term" value="C:membrane"/>
    <property type="evidence" value="ECO:0007669"/>
    <property type="project" value="InterPro"/>
</dbReference>
<dbReference type="GO" id="GO:0120010">
    <property type="term" value="P:intermembrane phospholipid transfer"/>
    <property type="evidence" value="ECO:0007669"/>
    <property type="project" value="TreeGrafter"/>
</dbReference>
<dbReference type="InterPro" id="IPR007428">
    <property type="entry name" value="MlaA"/>
</dbReference>
<dbReference type="PANTHER" id="PTHR30035:SF3">
    <property type="entry name" value="INTERMEMBRANE PHOSPHOLIPID TRANSPORT SYSTEM LIPOPROTEIN MLAA"/>
    <property type="match status" value="1"/>
</dbReference>
<dbReference type="PANTHER" id="PTHR30035">
    <property type="entry name" value="LIPOPROTEIN VACJ-RELATED"/>
    <property type="match status" value="1"/>
</dbReference>
<dbReference type="Pfam" id="PF04333">
    <property type="entry name" value="MlaA"/>
    <property type="match status" value="1"/>
</dbReference>
<dbReference type="PRINTS" id="PR01805">
    <property type="entry name" value="VACJLIPOPROT"/>
</dbReference>
<sequence length="251" mass="28579">MKILIILSIILCSLFGRADLEYVDNDIYTYNGGRNENGCLEVYDPYEKFNRKVFAFNSVLDYIIFRPLAVGYKNITNDYIKARVNSFISNVYTPLTVVNYGLQLNYDKTMKSVWRFLINTTLGIGGLFDVASKVGLQSDRQTFGSTLAHYGVAPGPYLVLPIIGSTNARDMTDSVITNYAINPLMYYTHNDFDLWILAVSKITDRYIVLPFSDYVMKNSTDPYVAIRSALHRAREASVQYPENFKCPKPKN</sequence>
<proteinExistence type="inferred from homology"/>
<protein>
    <recommendedName>
        <fullName>Uncharacterized protein RP093</fullName>
    </recommendedName>
</protein>
<comment type="similarity">
    <text evidence="2">Belongs to the MlaA family.</text>
</comment>
<gene>
    <name type="ordered locus">RP093</name>
</gene>
<feature type="signal peptide" evidence="1">
    <location>
        <begin position="1"/>
        <end position="18"/>
    </location>
</feature>
<feature type="chain" id="PRO_0000263037" description="Uncharacterized protein RP093">
    <location>
        <begin position="19"/>
        <end position="251"/>
    </location>
</feature>
<evidence type="ECO:0000255" key="1"/>
<evidence type="ECO:0000305" key="2"/>
<keyword id="KW-1185">Reference proteome</keyword>
<keyword id="KW-0732">Signal</keyword>
<reference key="1">
    <citation type="journal article" date="1998" name="Nature">
        <title>The genome sequence of Rickettsia prowazekii and the origin of mitochondria.</title>
        <authorList>
            <person name="Andersson S.G.E."/>
            <person name="Zomorodipour A."/>
            <person name="Andersson J.O."/>
            <person name="Sicheritz-Ponten T."/>
            <person name="Alsmark U.C.M."/>
            <person name="Podowski R.M."/>
            <person name="Naeslund A.K."/>
            <person name="Eriksson A.-S."/>
            <person name="Winkler H.H."/>
            <person name="Kurland C.G."/>
        </authorList>
    </citation>
    <scope>NUCLEOTIDE SEQUENCE [LARGE SCALE GENOMIC DNA]</scope>
    <source>
        <strain>Madrid E</strain>
    </source>
</reference>
<accession>Q9ZE54</accession>
<organism>
    <name type="scientific">Rickettsia prowazekii (strain Madrid E)</name>
    <dbReference type="NCBI Taxonomy" id="272947"/>
    <lineage>
        <taxon>Bacteria</taxon>
        <taxon>Pseudomonadati</taxon>
        <taxon>Pseudomonadota</taxon>
        <taxon>Alphaproteobacteria</taxon>
        <taxon>Rickettsiales</taxon>
        <taxon>Rickettsiaceae</taxon>
        <taxon>Rickettsieae</taxon>
        <taxon>Rickettsia</taxon>
        <taxon>typhus group</taxon>
    </lineage>
</organism>
<name>Y093_RICPR</name>